<organism>
    <name type="scientific">Escherichia fergusonii (strain ATCC 35469 / DSM 13698 / CCUG 18766 / IAM 14443 / JCM 21226 / LMG 7866 / NBRC 102419 / NCTC 12128 / CDC 0568-73)</name>
    <dbReference type="NCBI Taxonomy" id="585054"/>
    <lineage>
        <taxon>Bacteria</taxon>
        <taxon>Pseudomonadati</taxon>
        <taxon>Pseudomonadota</taxon>
        <taxon>Gammaproteobacteria</taxon>
        <taxon>Enterobacterales</taxon>
        <taxon>Enterobacteriaceae</taxon>
        <taxon>Escherichia</taxon>
    </lineage>
</organism>
<gene>
    <name evidence="1" type="primary">recO</name>
    <name type="ordered locus">EFER_0509</name>
</gene>
<comment type="function">
    <text evidence="1">Involved in DNA repair and RecF pathway recombination.</text>
</comment>
<comment type="subunit">
    <text evidence="1">Monomer.</text>
</comment>
<comment type="similarity">
    <text evidence="1">Belongs to the RecO family.</text>
</comment>
<evidence type="ECO:0000255" key="1">
    <source>
        <dbReference type="HAMAP-Rule" id="MF_00201"/>
    </source>
</evidence>
<accession>B7LUZ9</accession>
<protein>
    <recommendedName>
        <fullName evidence="1">DNA repair protein RecO</fullName>
    </recommendedName>
    <alternativeName>
        <fullName evidence="1">Recombination protein O</fullName>
    </alternativeName>
</protein>
<keyword id="KW-0227">DNA damage</keyword>
<keyword id="KW-0233">DNA recombination</keyword>
<keyword id="KW-0234">DNA repair</keyword>
<name>RECO_ESCF3</name>
<dbReference type="EMBL" id="CU928158">
    <property type="protein sequence ID" value="CAQ88057.1"/>
    <property type="molecule type" value="Genomic_DNA"/>
</dbReference>
<dbReference type="RefSeq" id="WP_000399393.1">
    <property type="nucleotide sequence ID" value="NC_011740.1"/>
</dbReference>
<dbReference type="SMR" id="B7LUZ9"/>
<dbReference type="GeneID" id="93774526"/>
<dbReference type="KEGG" id="efe:EFER_0509"/>
<dbReference type="HOGENOM" id="CLU_066645_1_0_6"/>
<dbReference type="OrthoDB" id="9804792at2"/>
<dbReference type="Proteomes" id="UP000000745">
    <property type="component" value="Chromosome"/>
</dbReference>
<dbReference type="GO" id="GO:0043590">
    <property type="term" value="C:bacterial nucleoid"/>
    <property type="evidence" value="ECO:0007669"/>
    <property type="project" value="TreeGrafter"/>
</dbReference>
<dbReference type="GO" id="GO:0006310">
    <property type="term" value="P:DNA recombination"/>
    <property type="evidence" value="ECO:0007669"/>
    <property type="project" value="UniProtKB-UniRule"/>
</dbReference>
<dbReference type="GO" id="GO:0006302">
    <property type="term" value="P:double-strand break repair"/>
    <property type="evidence" value="ECO:0007669"/>
    <property type="project" value="TreeGrafter"/>
</dbReference>
<dbReference type="FunFam" id="1.20.1440.120:FF:000001">
    <property type="entry name" value="DNA repair protein RecO"/>
    <property type="match status" value="1"/>
</dbReference>
<dbReference type="FunFam" id="2.40.50.140:FF:000074">
    <property type="entry name" value="DNA repair protein RecO"/>
    <property type="match status" value="1"/>
</dbReference>
<dbReference type="Gene3D" id="2.40.50.140">
    <property type="entry name" value="Nucleic acid-binding proteins"/>
    <property type="match status" value="1"/>
</dbReference>
<dbReference type="Gene3D" id="1.20.1440.120">
    <property type="entry name" value="Recombination protein O, C-terminal domain"/>
    <property type="match status" value="1"/>
</dbReference>
<dbReference type="HAMAP" id="MF_00201">
    <property type="entry name" value="RecO"/>
    <property type="match status" value="1"/>
</dbReference>
<dbReference type="InterPro" id="IPR037278">
    <property type="entry name" value="ARFGAP/RecO"/>
</dbReference>
<dbReference type="InterPro" id="IPR022572">
    <property type="entry name" value="DNA_rep/recomb_RecO_N"/>
</dbReference>
<dbReference type="InterPro" id="IPR012340">
    <property type="entry name" value="NA-bd_OB-fold"/>
</dbReference>
<dbReference type="InterPro" id="IPR003717">
    <property type="entry name" value="RecO"/>
</dbReference>
<dbReference type="InterPro" id="IPR042242">
    <property type="entry name" value="RecO_C"/>
</dbReference>
<dbReference type="NCBIfam" id="TIGR00613">
    <property type="entry name" value="reco"/>
    <property type="match status" value="1"/>
</dbReference>
<dbReference type="PANTHER" id="PTHR33991">
    <property type="entry name" value="DNA REPAIR PROTEIN RECO"/>
    <property type="match status" value="1"/>
</dbReference>
<dbReference type="PANTHER" id="PTHR33991:SF1">
    <property type="entry name" value="DNA REPAIR PROTEIN RECO"/>
    <property type="match status" value="1"/>
</dbReference>
<dbReference type="Pfam" id="PF02565">
    <property type="entry name" value="RecO_C"/>
    <property type="match status" value="1"/>
</dbReference>
<dbReference type="Pfam" id="PF11967">
    <property type="entry name" value="RecO_N"/>
    <property type="match status" value="1"/>
</dbReference>
<dbReference type="SUPFAM" id="SSF57863">
    <property type="entry name" value="ArfGap/RecO-like zinc finger"/>
    <property type="match status" value="1"/>
</dbReference>
<dbReference type="SUPFAM" id="SSF50249">
    <property type="entry name" value="Nucleic acid-binding proteins"/>
    <property type="match status" value="1"/>
</dbReference>
<proteinExistence type="inferred from homology"/>
<feature type="chain" id="PRO_1000118721" description="DNA repair protein RecO">
    <location>
        <begin position="1"/>
        <end position="242"/>
    </location>
</feature>
<sequence length="242" mass="27363">MEGWQRAFVLHSRPWSETSLMLDVFTEESGRVRLVAKGARSKRSTLKGALQPFTPLLLRFGGRGEVKTLRSAEAVSLALPLSGITLYSGLYINELLSRVLEYETRFSELFFDYLHCIQSLAGATGTPEPALRRFELALLGHLGYGVNFTHCAGSGEPVDDTMTYRYREEKGFIASVVIDNKTFTGRQLKALNAREFPDADTLRAAKRFTRMALKPYLGGKPLKSRELFRQFMPKRTVKTHYE</sequence>
<reference key="1">
    <citation type="journal article" date="2009" name="PLoS Genet.">
        <title>Organised genome dynamics in the Escherichia coli species results in highly diverse adaptive paths.</title>
        <authorList>
            <person name="Touchon M."/>
            <person name="Hoede C."/>
            <person name="Tenaillon O."/>
            <person name="Barbe V."/>
            <person name="Baeriswyl S."/>
            <person name="Bidet P."/>
            <person name="Bingen E."/>
            <person name="Bonacorsi S."/>
            <person name="Bouchier C."/>
            <person name="Bouvet O."/>
            <person name="Calteau A."/>
            <person name="Chiapello H."/>
            <person name="Clermont O."/>
            <person name="Cruveiller S."/>
            <person name="Danchin A."/>
            <person name="Diard M."/>
            <person name="Dossat C."/>
            <person name="Karoui M.E."/>
            <person name="Frapy E."/>
            <person name="Garry L."/>
            <person name="Ghigo J.M."/>
            <person name="Gilles A.M."/>
            <person name="Johnson J."/>
            <person name="Le Bouguenec C."/>
            <person name="Lescat M."/>
            <person name="Mangenot S."/>
            <person name="Martinez-Jehanne V."/>
            <person name="Matic I."/>
            <person name="Nassif X."/>
            <person name="Oztas S."/>
            <person name="Petit M.A."/>
            <person name="Pichon C."/>
            <person name="Rouy Z."/>
            <person name="Ruf C.S."/>
            <person name="Schneider D."/>
            <person name="Tourret J."/>
            <person name="Vacherie B."/>
            <person name="Vallenet D."/>
            <person name="Medigue C."/>
            <person name="Rocha E.P.C."/>
            <person name="Denamur E."/>
        </authorList>
    </citation>
    <scope>NUCLEOTIDE SEQUENCE [LARGE SCALE GENOMIC DNA]</scope>
    <source>
        <strain>ATCC 35469 / DSM 13698 / BCRC 15582 / CCUG 18766 / IAM 14443 / JCM 21226 / LMG 7866 / NBRC 102419 / NCTC 12128 / CDC 0568-73</strain>
    </source>
</reference>